<reference key="1">
    <citation type="journal article" date="2009" name="ISME J.">
        <title>The genome sequence of the psychrophilic archaeon, Methanococcoides burtonii: the role of genome evolution in cold adaptation.</title>
        <authorList>
            <person name="Allen M.A."/>
            <person name="Lauro F.M."/>
            <person name="Williams T.J."/>
            <person name="Burg D."/>
            <person name="Siddiqui K.S."/>
            <person name="De Francisci D."/>
            <person name="Chong K.W."/>
            <person name="Pilak O."/>
            <person name="Chew H.H."/>
            <person name="De Maere M.Z."/>
            <person name="Ting L."/>
            <person name="Katrib M."/>
            <person name="Ng C."/>
            <person name="Sowers K.R."/>
            <person name="Galperin M.Y."/>
            <person name="Anderson I.J."/>
            <person name="Ivanova N."/>
            <person name="Dalin E."/>
            <person name="Martinez M."/>
            <person name="Lapidus A."/>
            <person name="Hauser L."/>
            <person name="Land M."/>
            <person name="Thomas T."/>
            <person name="Cavicchioli R."/>
        </authorList>
    </citation>
    <scope>NUCLEOTIDE SEQUENCE [LARGE SCALE GENOMIC DNA]</scope>
    <source>
        <strain>DSM 6242 / NBRC 107633 / OCM 468 / ACE-M</strain>
    </source>
</reference>
<sequence>MEQRKCSFCGELLEPGTGLLFAKRDGSTYYFCSSKCKGNFDLGRLPRRTVWTEQGRIYLKKA</sequence>
<evidence type="ECO:0000255" key="1">
    <source>
        <dbReference type="HAMAP-Rule" id="MF_00773"/>
    </source>
</evidence>
<evidence type="ECO:0000305" key="2"/>
<feature type="chain" id="PRO_1000017353" description="Large ribosomal subunit protein eL24">
    <location>
        <begin position="1"/>
        <end position="62"/>
    </location>
</feature>
<feature type="zinc finger region" description="C4-type" evidence="1">
    <location>
        <begin position="6"/>
        <end position="36"/>
    </location>
</feature>
<feature type="binding site" evidence="1">
    <location>
        <position position="6"/>
    </location>
    <ligand>
        <name>Zn(2+)</name>
        <dbReference type="ChEBI" id="CHEBI:29105"/>
    </ligand>
</feature>
<feature type="binding site" evidence="1">
    <location>
        <position position="9"/>
    </location>
    <ligand>
        <name>Zn(2+)</name>
        <dbReference type="ChEBI" id="CHEBI:29105"/>
    </ligand>
</feature>
<feature type="binding site" evidence="1">
    <location>
        <position position="32"/>
    </location>
    <ligand>
        <name>Zn(2+)</name>
        <dbReference type="ChEBI" id="CHEBI:29105"/>
    </ligand>
</feature>
<feature type="binding site" evidence="1">
    <location>
        <position position="36"/>
    </location>
    <ligand>
        <name>Zn(2+)</name>
        <dbReference type="ChEBI" id="CHEBI:29105"/>
    </ligand>
</feature>
<keyword id="KW-0479">Metal-binding</keyword>
<keyword id="KW-0687">Ribonucleoprotein</keyword>
<keyword id="KW-0689">Ribosomal protein</keyword>
<keyword id="KW-0694">RNA-binding</keyword>
<keyword id="KW-0699">rRNA-binding</keyword>
<keyword id="KW-0862">Zinc</keyword>
<keyword id="KW-0863">Zinc-finger</keyword>
<comment type="function">
    <text evidence="1">Binds to the 23S rRNA.</text>
</comment>
<comment type="cofactor">
    <cofactor evidence="1">
        <name>Zn(2+)</name>
        <dbReference type="ChEBI" id="CHEBI:29105"/>
    </cofactor>
    <text evidence="1">Binds 1 zinc ion per subunit.</text>
</comment>
<comment type="subunit">
    <text evidence="1">Part of the 50S ribosomal subunit. Forms a cluster with proteins L3 and L14.</text>
</comment>
<comment type="similarity">
    <text evidence="1">Belongs to the eukaryotic ribosomal protein eL24 family.</text>
</comment>
<accession>Q12Z95</accession>
<dbReference type="EMBL" id="CP000300">
    <property type="protein sequence ID" value="ABE51231.1"/>
    <property type="molecule type" value="Genomic_DNA"/>
</dbReference>
<dbReference type="RefSeq" id="WP_011498393.1">
    <property type="nucleotide sequence ID" value="NC_007955.1"/>
</dbReference>
<dbReference type="SMR" id="Q12Z95"/>
<dbReference type="STRING" id="259564.Mbur_0221"/>
<dbReference type="GeneID" id="3997657"/>
<dbReference type="KEGG" id="mbu:Mbur_0221"/>
<dbReference type="HOGENOM" id="CLU_190191_0_0_2"/>
<dbReference type="OrthoDB" id="55506at2157"/>
<dbReference type="Proteomes" id="UP000001979">
    <property type="component" value="Chromosome"/>
</dbReference>
<dbReference type="GO" id="GO:1990904">
    <property type="term" value="C:ribonucleoprotein complex"/>
    <property type="evidence" value="ECO:0007669"/>
    <property type="project" value="UniProtKB-KW"/>
</dbReference>
<dbReference type="GO" id="GO:0005840">
    <property type="term" value="C:ribosome"/>
    <property type="evidence" value="ECO:0007669"/>
    <property type="project" value="UniProtKB-KW"/>
</dbReference>
<dbReference type="GO" id="GO:0019843">
    <property type="term" value="F:rRNA binding"/>
    <property type="evidence" value="ECO:0007669"/>
    <property type="project" value="UniProtKB-UniRule"/>
</dbReference>
<dbReference type="GO" id="GO:0003735">
    <property type="term" value="F:structural constituent of ribosome"/>
    <property type="evidence" value="ECO:0007669"/>
    <property type="project" value="InterPro"/>
</dbReference>
<dbReference type="GO" id="GO:0008270">
    <property type="term" value="F:zinc ion binding"/>
    <property type="evidence" value="ECO:0007669"/>
    <property type="project" value="UniProtKB-UniRule"/>
</dbReference>
<dbReference type="GO" id="GO:0006412">
    <property type="term" value="P:translation"/>
    <property type="evidence" value="ECO:0007669"/>
    <property type="project" value="UniProtKB-UniRule"/>
</dbReference>
<dbReference type="CDD" id="cd00472">
    <property type="entry name" value="Ribosomal_L24e_L24"/>
    <property type="match status" value="1"/>
</dbReference>
<dbReference type="Gene3D" id="2.30.170.20">
    <property type="entry name" value="Ribosomal protein L24e"/>
    <property type="match status" value="1"/>
</dbReference>
<dbReference type="HAMAP" id="MF_00773">
    <property type="entry name" value="Ribosomal_eL24"/>
    <property type="match status" value="1"/>
</dbReference>
<dbReference type="InterPro" id="IPR038630">
    <property type="entry name" value="L24e/L24_sf"/>
</dbReference>
<dbReference type="InterPro" id="IPR055345">
    <property type="entry name" value="Ribosomal_eL24-rel_arc"/>
</dbReference>
<dbReference type="InterPro" id="IPR000988">
    <property type="entry name" value="Ribosomal_eL24-rel_N"/>
</dbReference>
<dbReference type="InterPro" id="IPR023442">
    <property type="entry name" value="Ribosomal_eL24_CS"/>
</dbReference>
<dbReference type="InterPro" id="IPR011017">
    <property type="entry name" value="TRASH_dom"/>
</dbReference>
<dbReference type="NCBIfam" id="NF034186">
    <property type="entry name" value="PRK14891.1-1"/>
    <property type="match status" value="1"/>
</dbReference>
<dbReference type="Pfam" id="PF01246">
    <property type="entry name" value="Ribosomal_L24e"/>
    <property type="match status" value="1"/>
</dbReference>
<dbReference type="SMART" id="SM00746">
    <property type="entry name" value="TRASH"/>
    <property type="match status" value="1"/>
</dbReference>
<dbReference type="SUPFAM" id="SSF57716">
    <property type="entry name" value="Glucocorticoid receptor-like (DNA-binding domain)"/>
    <property type="match status" value="1"/>
</dbReference>
<dbReference type="PROSITE" id="PS01073">
    <property type="entry name" value="RIBOSOMAL_L24E"/>
    <property type="match status" value="1"/>
</dbReference>
<gene>
    <name evidence="1" type="primary">rpl24e</name>
    <name type="ordered locus">Mbur_0221</name>
</gene>
<proteinExistence type="inferred from homology"/>
<protein>
    <recommendedName>
        <fullName evidence="1">Large ribosomal subunit protein eL24</fullName>
    </recommendedName>
    <alternativeName>
        <fullName evidence="2">50S ribosomal protein L24e</fullName>
    </alternativeName>
</protein>
<organism>
    <name type="scientific">Methanococcoides burtonii (strain DSM 6242 / NBRC 107633 / OCM 468 / ACE-M)</name>
    <dbReference type="NCBI Taxonomy" id="259564"/>
    <lineage>
        <taxon>Archaea</taxon>
        <taxon>Methanobacteriati</taxon>
        <taxon>Methanobacteriota</taxon>
        <taxon>Stenosarchaea group</taxon>
        <taxon>Methanomicrobia</taxon>
        <taxon>Methanosarcinales</taxon>
        <taxon>Methanosarcinaceae</taxon>
        <taxon>Methanococcoides</taxon>
    </lineage>
</organism>
<name>RL24E_METBU</name>